<name>ATPG_CERSK</name>
<gene>
    <name evidence="1" type="primary">atpG</name>
    <name type="ordered locus">RSKD131_0620</name>
</gene>
<proteinExistence type="inferred from homology"/>
<reference key="1">
    <citation type="journal article" date="2009" name="J. Bacteriol.">
        <title>Complete genome sequence of Rhodobacter sphaeroides KD131.</title>
        <authorList>
            <person name="Lim S.-K."/>
            <person name="Kim S.J."/>
            <person name="Cha S.H."/>
            <person name="Oh Y.-K."/>
            <person name="Rhee H.-J."/>
            <person name="Kim M.-S."/>
            <person name="Lee J.K."/>
        </authorList>
    </citation>
    <scope>NUCLEOTIDE SEQUENCE [LARGE SCALE GENOMIC DNA]</scope>
    <source>
        <strain>KD131 / KCTC 12085</strain>
    </source>
</reference>
<organism>
    <name type="scientific">Cereibacter sphaeroides (strain KD131 / KCTC 12085)</name>
    <name type="common">Rhodobacter sphaeroides</name>
    <dbReference type="NCBI Taxonomy" id="557760"/>
    <lineage>
        <taxon>Bacteria</taxon>
        <taxon>Pseudomonadati</taxon>
        <taxon>Pseudomonadota</taxon>
        <taxon>Alphaproteobacteria</taxon>
        <taxon>Rhodobacterales</taxon>
        <taxon>Paracoccaceae</taxon>
        <taxon>Cereibacter</taxon>
    </lineage>
</organism>
<keyword id="KW-0066">ATP synthesis</keyword>
<keyword id="KW-0997">Cell inner membrane</keyword>
<keyword id="KW-1003">Cell membrane</keyword>
<keyword id="KW-0139">CF(1)</keyword>
<keyword id="KW-0375">Hydrogen ion transport</keyword>
<keyword id="KW-0406">Ion transport</keyword>
<keyword id="KW-0472">Membrane</keyword>
<keyword id="KW-0813">Transport</keyword>
<dbReference type="EMBL" id="CP001150">
    <property type="protein sequence ID" value="ACM00480.1"/>
    <property type="molecule type" value="Genomic_DNA"/>
</dbReference>
<dbReference type="RefSeq" id="WP_002719461.1">
    <property type="nucleotide sequence ID" value="NC_011963.1"/>
</dbReference>
<dbReference type="SMR" id="B9KPI7"/>
<dbReference type="GeneID" id="67446069"/>
<dbReference type="KEGG" id="rsk:RSKD131_0620"/>
<dbReference type="HOGENOM" id="CLU_050669_0_1_5"/>
<dbReference type="GO" id="GO:0005886">
    <property type="term" value="C:plasma membrane"/>
    <property type="evidence" value="ECO:0007669"/>
    <property type="project" value="UniProtKB-SubCell"/>
</dbReference>
<dbReference type="GO" id="GO:0045259">
    <property type="term" value="C:proton-transporting ATP synthase complex"/>
    <property type="evidence" value="ECO:0007669"/>
    <property type="project" value="UniProtKB-KW"/>
</dbReference>
<dbReference type="GO" id="GO:0005524">
    <property type="term" value="F:ATP binding"/>
    <property type="evidence" value="ECO:0007669"/>
    <property type="project" value="UniProtKB-UniRule"/>
</dbReference>
<dbReference type="GO" id="GO:0046933">
    <property type="term" value="F:proton-transporting ATP synthase activity, rotational mechanism"/>
    <property type="evidence" value="ECO:0007669"/>
    <property type="project" value="UniProtKB-UniRule"/>
</dbReference>
<dbReference type="GO" id="GO:0042777">
    <property type="term" value="P:proton motive force-driven plasma membrane ATP synthesis"/>
    <property type="evidence" value="ECO:0007669"/>
    <property type="project" value="UniProtKB-UniRule"/>
</dbReference>
<dbReference type="CDD" id="cd12151">
    <property type="entry name" value="F1-ATPase_gamma"/>
    <property type="match status" value="1"/>
</dbReference>
<dbReference type="FunFam" id="1.10.287.80:FF:000001">
    <property type="entry name" value="ATP synthase gamma chain"/>
    <property type="match status" value="1"/>
</dbReference>
<dbReference type="FunFam" id="1.10.287.80:FF:000003">
    <property type="entry name" value="ATP synthase gamma chain, chloroplastic"/>
    <property type="match status" value="1"/>
</dbReference>
<dbReference type="Gene3D" id="3.40.1380.10">
    <property type="match status" value="1"/>
</dbReference>
<dbReference type="Gene3D" id="1.10.287.80">
    <property type="entry name" value="ATP synthase, gamma subunit, helix hairpin domain"/>
    <property type="match status" value="1"/>
</dbReference>
<dbReference type="HAMAP" id="MF_00815">
    <property type="entry name" value="ATP_synth_gamma_bact"/>
    <property type="match status" value="1"/>
</dbReference>
<dbReference type="InterPro" id="IPR035968">
    <property type="entry name" value="ATP_synth_F1_ATPase_gsu"/>
</dbReference>
<dbReference type="InterPro" id="IPR000131">
    <property type="entry name" value="ATP_synth_F1_gsu"/>
</dbReference>
<dbReference type="InterPro" id="IPR023632">
    <property type="entry name" value="ATP_synth_F1_gsu_CS"/>
</dbReference>
<dbReference type="NCBIfam" id="TIGR01146">
    <property type="entry name" value="ATPsyn_F1gamma"/>
    <property type="match status" value="1"/>
</dbReference>
<dbReference type="NCBIfam" id="NF004146">
    <property type="entry name" value="PRK05621.1-4"/>
    <property type="match status" value="1"/>
</dbReference>
<dbReference type="PANTHER" id="PTHR11693">
    <property type="entry name" value="ATP SYNTHASE GAMMA CHAIN"/>
    <property type="match status" value="1"/>
</dbReference>
<dbReference type="PANTHER" id="PTHR11693:SF22">
    <property type="entry name" value="ATP SYNTHASE SUBUNIT GAMMA, MITOCHONDRIAL"/>
    <property type="match status" value="1"/>
</dbReference>
<dbReference type="Pfam" id="PF00231">
    <property type="entry name" value="ATP-synt"/>
    <property type="match status" value="1"/>
</dbReference>
<dbReference type="PIRSF" id="PIRSF039089">
    <property type="entry name" value="ATP_synthase_gamma"/>
    <property type="match status" value="1"/>
</dbReference>
<dbReference type="PRINTS" id="PR00126">
    <property type="entry name" value="ATPASEGAMMA"/>
</dbReference>
<dbReference type="SUPFAM" id="SSF52943">
    <property type="entry name" value="ATP synthase (F1-ATPase), gamma subunit"/>
    <property type="match status" value="1"/>
</dbReference>
<dbReference type="PROSITE" id="PS00153">
    <property type="entry name" value="ATPASE_GAMMA"/>
    <property type="match status" value="1"/>
</dbReference>
<feature type="chain" id="PRO_1000148634" description="ATP synthase gamma chain">
    <location>
        <begin position="1"/>
        <end position="289"/>
    </location>
</feature>
<accession>B9KPI7</accession>
<sequence>MPSLKDLKNRIGSVKNTRKITKAMQMVAAAKLRRAQEAAEAARPFAERMTAVMTGLAGSVGSSESAPRLLAGTGSDKVHLLVVMTAERGLCGGFNSSIVRLARAHAAKLLTQGKTVKILTVGKKGREQLRRDLGQHFIGHVDLSEVKRMGYPVAQGIARDLLDRFDKGEFDVATIFFARFQSVISQVPTAQQVIPAVFEGEGEVSSLYDYEPSEEGVLADLLPRGVATQIFTALLENGASEQGARMSAMDNATRNAGDMINRLTIEYNRSRQAAITKELIEIISGAEAL</sequence>
<comment type="function">
    <text evidence="1">Produces ATP from ADP in the presence of a proton gradient across the membrane. The gamma chain is believed to be important in regulating ATPase activity and the flow of protons through the CF(0) complex.</text>
</comment>
<comment type="subunit">
    <text evidence="1">F-type ATPases have 2 components, CF(1) - the catalytic core - and CF(0) - the membrane proton channel. CF(1) has five subunits: alpha(3), beta(3), gamma(1), delta(1), epsilon(1). CF(0) has three main subunits: a, b and c.</text>
</comment>
<comment type="subcellular location">
    <subcellularLocation>
        <location evidence="1">Cell inner membrane</location>
        <topology evidence="1">Peripheral membrane protein</topology>
    </subcellularLocation>
</comment>
<comment type="similarity">
    <text evidence="1">Belongs to the ATPase gamma chain family.</text>
</comment>
<protein>
    <recommendedName>
        <fullName evidence="1">ATP synthase gamma chain</fullName>
    </recommendedName>
    <alternativeName>
        <fullName evidence="1">ATP synthase F1 sector gamma subunit</fullName>
    </alternativeName>
    <alternativeName>
        <fullName evidence="1">F-ATPase gamma subunit</fullName>
    </alternativeName>
</protein>
<evidence type="ECO:0000255" key="1">
    <source>
        <dbReference type="HAMAP-Rule" id="MF_00815"/>
    </source>
</evidence>